<dbReference type="EC" id="6.1.1.6" evidence="1"/>
<dbReference type="EMBL" id="CP000266">
    <property type="protein sequence ID" value="ABF05009.1"/>
    <property type="molecule type" value="Genomic_DNA"/>
</dbReference>
<dbReference type="RefSeq" id="WP_000003068.1">
    <property type="nucleotide sequence ID" value="NC_008258.1"/>
</dbReference>
<dbReference type="BMRB" id="Q0T106"/>
<dbReference type="SMR" id="Q0T106"/>
<dbReference type="GeneID" id="93779112"/>
<dbReference type="KEGG" id="sfv:SFV_2938"/>
<dbReference type="HOGENOM" id="CLU_008255_6_0_6"/>
<dbReference type="Proteomes" id="UP000000659">
    <property type="component" value="Chromosome"/>
</dbReference>
<dbReference type="GO" id="GO:0005829">
    <property type="term" value="C:cytosol"/>
    <property type="evidence" value="ECO:0007669"/>
    <property type="project" value="TreeGrafter"/>
</dbReference>
<dbReference type="GO" id="GO:0005524">
    <property type="term" value="F:ATP binding"/>
    <property type="evidence" value="ECO:0007669"/>
    <property type="project" value="UniProtKB-UniRule"/>
</dbReference>
<dbReference type="GO" id="GO:0004824">
    <property type="term" value="F:lysine-tRNA ligase activity"/>
    <property type="evidence" value="ECO:0007669"/>
    <property type="project" value="UniProtKB-UniRule"/>
</dbReference>
<dbReference type="GO" id="GO:0000287">
    <property type="term" value="F:magnesium ion binding"/>
    <property type="evidence" value="ECO:0007669"/>
    <property type="project" value="UniProtKB-UniRule"/>
</dbReference>
<dbReference type="GO" id="GO:0000049">
    <property type="term" value="F:tRNA binding"/>
    <property type="evidence" value="ECO:0007669"/>
    <property type="project" value="TreeGrafter"/>
</dbReference>
<dbReference type="GO" id="GO:0006430">
    <property type="term" value="P:lysyl-tRNA aminoacylation"/>
    <property type="evidence" value="ECO:0007669"/>
    <property type="project" value="UniProtKB-UniRule"/>
</dbReference>
<dbReference type="CDD" id="cd00775">
    <property type="entry name" value="LysRS_core"/>
    <property type="match status" value="1"/>
</dbReference>
<dbReference type="CDD" id="cd04322">
    <property type="entry name" value="LysRS_N"/>
    <property type="match status" value="1"/>
</dbReference>
<dbReference type="FunFam" id="2.40.50.140:FF:000024">
    <property type="entry name" value="Lysine--tRNA ligase"/>
    <property type="match status" value="1"/>
</dbReference>
<dbReference type="FunFam" id="3.30.930.10:FF:000001">
    <property type="entry name" value="Lysine--tRNA ligase"/>
    <property type="match status" value="1"/>
</dbReference>
<dbReference type="Gene3D" id="3.30.930.10">
    <property type="entry name" value="Bira Bifunctional Protein, Domain 2"/>
    <property type="match status" value="1"/>
</dbReference>
<dbReference type="Gene3D" id="2.40.50.140">
    <property type="entry name" value="Nucleic acid-binding proteins"/>
    <property type="match status" value="1"/>
</dbReference>
<dbReference type="HAMAP" id="MF_00252">
    <property type="entry name" value="Lys_tRNA_synth_class2"/>
    <property type="match status" value="1"/>
</dbReference>
<dbReference type="InterPro" id="IPR004364">
    <property type="entry name" value="Aa-tRNA-synt_II"/>
</dbReference>
<dbReference type="InterPro" id="IPR006195">
    <property type="entry name" value="aa-tRNA-synth_II"/>
</dbReference>
<dbReference type="InterPro" id="IPR045864">
    <property type="entry name" value="aa-tRNA-synth_II/BPL/LPL"/>
</dbReference>
<dbReference type="InterPro" id="IPR002313">
    <property type="entry name" value="Lys-tRNA-ligase_II"/>
</dbReference>
<dbReference type="InterPro" id="IPR034762">
    <property type="entry name" value="Lys-tRNA-ligase_II_bac/euk"/>
</dbReference>
<dbReference type="InterPro" id="IPR044136">
    <property type="entry name" value="Lys-tRNA-ligase_II_N"/>
</dbReference>
<dbReference type="InterPro" id="IPR018149">
    <property type="entry name" value="Lys-tRNA-synth_II_C"/>
</dbReference>
<dbReference type="InterPro" id="IPR012340">
    <property type="entry name" value="NA-bd_OB-fold"/>
</dbReference>
<dbReference type="InterPro" id="IPR004365">
    <property type="entry name" value="NA-bd_OB_tRNA"/>
</dbReference>
<dbReference type="NCBIfam" id="TIGR00499">
    <property type="entry name" value="lysS_bact"/>
    <property type="match status" value="1"/>
</dbReference>
<dbReference type="NCBIfam" id="NF001756">
    <property type="entry name" value="PRK00484.1"/>
    <property type="match status" value="1"/>
</dbReference>
<dbReference type="NCBIfam" id="NF009101">
    <property type="entry name" value="PRK12445.1"/>
    <property type="match status" value="1"/>
</dbReference>
<dbReference type="PANTHER" id="PTHR42918:SF15">
    <property type="entry name" value="LYSINE--TRNA LIGASE, CHLOROPLASTIC_MITOCHONDRIAL"/>
    <property type="match status" value="1"/>
</dbReference>
<dbReference type="PANTHER" id="PTHR42918">
    <property type="entry name" value="LYSYL-TRNA SYNTHETASE"/>
    <property type="match status" value="1"/>
</dbReference>
<dbReference type="Pfam" id="PF00152">
    <property type="entry name" value="tRNA-synt_2"/>
    <property type="match status" value="1"/>
</dbReference>
<dbReference type="Pfam" id="PF01336">
    <property type="entry name" value="tRNA_anti-codon"/>
    <property type="match status" value="1"/>
</dbReference>
<dbReference type="PIRSF" id="PIRSF039101">
    <property type="entry name" value="LysRS2"/>
    <property type="match status" value="1"/>
</dbReference>
<dbReference type="PRINTS" id="PR00982">
    <property type="entry name" value="TRNASYNTHLYS"/>
</dbReference>
<dbReference type="SUPFAM" id="SSF55681">
    <property type="entry name" value="Class II aaRS and biotin synthetases"/>
    <property type="match status" value="1"/>
</dbReference>
<dbReference type="SUPFAM" id="SSF50249">
    <property type="entry name" value="Nucleic acid-binding proteins"/>
    <property type="match status" value="1"/>
</dbReference>
<dbReference type="PROSITE" id="PS50862">
    <property type="entry name" value="AA_TRNA_LIGASE_II"/>
    <property type="match status" value="1"/>
</dbReference>
<organism>
    <name type="scientific">Shigella flexneri serotype 5b (strain 8401)</name>
    <dbReference type="NCBI Taxonomy" id="373384"/>
    <lineage>
        <taxon>Bacteria</taxon>
        <taxon>Pseudomonadati</taxon>
        <taxon>Pseudomonadota</taxon>
        <taxon>Gammaproteobacteria</taxon>
        <taxon>Enterobacterales</taxon>
        <taxon>Enterobacteriaceae</taxon>
        <taxon>Shigella</taxon>
    </lineage>
</organism>
<feature type="chain" id="PRO_1000012937" description="Lysine--tRNA ligase">
    <location>
        <begin position="1"/>
        <end position="505"/>
    </location>
</feature>
<feature type="binding site" evidence="1">
    <location>
        <position position="415"/>
    </location>
    <ligand>
        <name>Mg(2+)</name>
        <dbReference type="ChEBI" id="CHEBI:18420"/>
        <label>1</label>
    </ligand>
</feature>
<feature type="binding site" evidence="1">
    <location>
        <position position="422"/>
    </location>
    <ligand>
        <name>Mg(2+)</name>
        <dbReference type="ChEBI" id="CHEBI:18420"/>
        <label>1</label>
    </ligand>
</feature>
<feature type="binding site" evidence="1">
    <location>
        <position position="422"/>
    </location>
    <ligand>
        <name>Mg(2+)</name>
        <dbReference type="ChEBI" id="CHEBI:18420"/>
        <label>2</label>
    </ligand>
</feature>
<name>SYK_SHIF8</name>
<gene>
    <name evidence="1" type="primary">lysS</name>
    <name type="ordered locus">SFV_2938</name>
</gene>
<keyword id="KW-0030">Aminoacyl-tRNA synthetase</keyword>
<keyword id="KW-0067">ATP-binding</keyword>
<keyword id="KW-0963">Cytoplasm</keyword>
<keyword id="KW-0436">Ligase</keyword>
<keyword id="KW-0460">Magnesium</keyword>
<keyword id="KW-0479">Metal-binding</keyword>
<keyword id="KW-0547">Nucleotide-binding</keyword>
<keyword id="KW-0648">Protein biosynthesis</keyword>
<evidence type="ECO:0000255" key="1">
    <source>
        <dbReference type="HAMAP-Rule" id="MF_00252"/>
    </source>
</evidence>
<protein>
    <recommendedName>
        <fullName evidence="1">Lysine--tRNA ligase</fullName>
        <ecNumber evidence="1">6.1.1.6</ecNumber>
    </recommendedName>
    <alternativeName>
        <fullName evidence="1">Lysyl-tRNA synthetase</fullName>
        <shortName evidence="1">LysRS</shortName>
    </alternativeName>
</protein>
<sequence>MSEQHAQGADAVVDLNNELKTRREKLANLREQGIAFPNDFRRDHTSDQLHAEFDGKENEELEALNIEVAVAGRMMTRRIMGKASFVTLQDVGGRIQLYVARDDLPEGVYNEQFKKWDLGDILGAKGKLFKTKTGELSIHCTELRLLTKALRPLPDKFHGLQDQEARYRQRYLDLISNDESRNTFKVRSQILSGIRQFMVNRGFMEVETPMMQVIPGGAAARPFITHHNALDLDMYLRIAPELYLKRLVVGGFERVFEINRNFRNEGISVRHNPEFTMMELYMAYADYKDLIELTESLFRTLAQDILGKTEVTYGDVTLDFGKPFEKLTMREAIKKYRPETDMADLDNFDSAKAIAESIGIHVEKSWGLGRIVTEIFEEVAEAHLIQPTFITEYPAEVSPLARRNDINPEITDRFEFFIGGREIGNGFSELNDAEDQAQRFLDQVAAKDAGDDEAMFYDEDYVTALEHGLPPTAGLGIGIDRMVMLFTNSHTIRDVILFPAMRPVK</sequence>
<proteinExistence type="inferred from homology"/>
<accession>Q0T106</accession>
<reference key="1">
    <citation type="journal article" date="2006" name="BMC Genomics">
        <title>Complete genome sequence of Shigella flexneri 5b and comparison with Shigella flexneri 2a.</title>
        <authorList>
            <person name="Nie H."/>
            <person name="Yang F."/>
            <person name="Zhang X."/>
            <person name="Yang J."/>
            <person name="Chen L."/>
            <person name="Wang J."/>
            <person name="Xiong Z."/>
            <person name="Peng J."/>
            <person name="Sun L."/>
            <person name="Dong J."/>
            <person name="Xue Y."/>
            <person name="Xu X."/>
            <person name="Chen S."/>
            <person name="Yao Z."/>
            <person name="Shen Y."/>
            <person name="Jin Q."/>
        </authorList>
    </citation>
    <scope>NUCLEOTIDE SEQUENCE [LARGE SCALE GENOMIC DNA]</scope>
    <source>
        <strain>8401</strain>
    </source>
</reference>
<comment type="catalytic activity">
    <reaction evidence="1">
        <text>tRNA(Lys) + L-lysine + ATP = L-lysyl-tRNA(Lys) + AMP + diphosphate</text>
        <dbReference type="Rhea" id="RHEA:20792"/>
        <dbReference type="Rhea" id="RHEA-COMP:9696"/>
        <dbReference type="Rhea" id="RHEA-COMP:9697"/>
        <dbReference type="ChEBI" id="CHEBI:30616"/>
        <dbReference type="ChEBI" id="CHEBI:32551"/>
        <dbReference type="ChEBI" id="CHEBI:33019"/>
        <dbReference type="ChEBI" id="CHEBI:78442"/>
        <dbReference type="ChEBI" id="CHEBI:78529"/>
        <dbReference type="ChEBI" id="CHEBI:456215"/>
        <dbReference type="EC" id="6.1.1.6"/>
    </reaction>
</comment>
<comment type="cofactor">
    <cofactor evidence="1">
        <name>Mg(2+)</name>
        <dbReference type="ChEBI" id="CHEBI:18420"/>
    </cofactor>
    <text evidence="1">Binds 3 Mg(2+) ions per subunit.</text>
</comment>
<comment type="subunit">
    <text evidence="1">Homodimer.</text>
</comment>
<comment type="subcellular location">
    <subcellularLocation>
        <location evidence="1">Cytoplasm</location>
    </subcellularLocation>
</comment>
<comment type="similarity">
    <text evidence="1">Belongs to the class-II aminoacyl-tRNA synthetase family.</text>
</comment>